<comment type="function">
    <text evidence="1">The RecF protein is involved in DNA metabolism; it is required for DNA replication and normal SOS inducibility. RecF binds preferentially to single-stranded, linear DNA. It also seems to bind ATP.</text>
</comment>
<comment type="subcellular location">
    <subcellularLocation>
        <location evidence="1">Cytoplasm</location>
    </subcellularLocation>
</comment>
<comment type="similarity">
    <text evidence="1">Belongs to the RecF family.</text>
</comment>
<gene>
    <name evidence="1" type="primary">recF</name>
    <name type="ordered locus">BF0958</name>
</gene>
<name>RECF_BACFR</name>
<organism>
    <name type="scientific">Bacteroides fragilis (strain YCH46)</name>
    <dbReference type="NCBI Taxonomy" id="295405"/>
    <lineage>
        <taxon>Bacteria</taxon>
        <taxon>Pseudomonadati</taxon>
        <taxon>Bacteroidota</taxon>
        <taxon>Bacteroidia</taxon>
        <taxon>Bacteroidales</taxon>
        <taxon>Bacteroidaceae</taxon>
        <taxon>Bacteroides</taxon>
    </lineage>
</organism>
<accession>Q64XR8</accession>
<keyword id="KW-0067">ATP-binding</keyword>
<keyword id="KW-0963">Cytoplasm</keyword>
<keyword id="KW-0227">DNA damage</keyword>
<keyword id="KW-0234">DNA repair</keyword>
<keyword id="KW-0235">DNA replication</keyword>
<keyword id="KW-0238">DNA-binding</keyword>
<keyword id="KW-0547">Nucleotide-binding</keyword>
<keyword id="KW-0742">SOS response</keyword>
<proteinExistence type="inferred from homology"/>
<reference key="1">
    <citation type="journal article" date="2004" name="Proc. Natl. Acad. Sci. U.S.A.">
        <title>Genomic analysis of Bacteroides fragilis reveals extensive DNA inversions regulating cell surface adaptation.</title>
        <authorList>
            <person name="Kuwahara T."/>
            <person name="Yamashita A."/>
            <person name="Hirakawa H."/>
            <person name="Nakayama H."/>
            <person name="Toh H."/>
            <person name="Okada N."/>
            <person name="Kuhara S."/>
            <person name="Hattori M."/>
            <person name="Hayashi T."/>
            <person name="Ohnishi Y."/>
        </authorList>
    </citation>
    <scope>NUCLEOTIDE SEQUENCE [LARGE SCALE GENOMIC DNA]</scope>
    <source>
        <strain>YCH46</strain>
    </source>
</reference>
<protein>
    <recommendedName>
        <fullName evidence="1">DNA replication and repair protein RecF</fullName>
    </recommendedName>
</protein>
<evidence type="ECO:0000255" key="1">
    <source>
        <dbReference type="HAMAP-Rule" id="MF_00365"/>
    </source>
</evidence>
<dbReference type="EMBL" id="AP006841">
    <property type="protein sequence ID" value="BAD47708.1"/>
    <property type="molecule type" value="Genomic_DNA"/>
</dbReference>
<dbReference type="RefSeq" id="WP_005785234.1">
    <property type="nucleotide sequence ID" value="NC_006347.1"/>
</dbReference>
<dbReference type="RefSeq" id="YP_098242.1">
    <property type="nucleotide sequence ID" value="NC_006347.1"/>
</dbReference>
<dbReference type="SMR" id="Q64XR8"/>
<dbReference type="STRING" id="295405.BF0958"/>
<dbReference type="KEGG" id="bfr:BF0958"/>
<dbReference type="PATRIC" id="fig|295405.11.peg.960"/>
<dbReference type="HOGENOM" id="CLU_040267_0_1_10"/>
<dbReference type="OrthoDB" id="9803889at2"/>
<dbReference type="Proteomes" id="UP000002197">
    <property type="component" value="Chromosome"/>
</dbReference>
<dbReference type="GO" id="GO:0005737">
    <property type="term" value="C:cytoplasm"/>
    <property type="evidence" value="ECO:0007669"/>
    <property type="project" value="UniProtKB-SubCell"/>
</dbReference>
<dbReference type="GO" id="GO:0005524">
    <property type="term" value="F:ATP binding"/>
    <property type="evidence" value="ECO:0007669"/>
    <property type="project" value="UniProtKB-UniRule"/>
</dbReference>
<dbReference type="GO" id="GO:0003697">
    <property type="term" value="F:single-stranded DNA binding"/>
    <property type="evidence" value="ECO:0007669"/>
    <property type="project" value="UniProtKB-UniRule"/>
</dbReference>
<dbReference type="GO" id="GO:0006260">
    <property type="term" value="P:DNA replication"/>
    <property type="evidence" value="ECO:0007669"/>
    <property type="project" value="UniProtKB-UniRule"/>
</dbReference>
<dbReference type="GO" id="GO:0000731">
    <property type="term" value="P:DNA synthesis involved in DNA repair"/>
    <property type="evidence" value="ECO:0007669"/>
    <property type="project" value="TreeGrafter"/>
</dbReference>
<dbReference type="GO" id="GO:0006302">
    <property type="term" value="P:double-strand break repair"/>
    <property type="evidence" value="ECO:0007669"/>
    <property type="project" value="TreeGrafter"/>
</dbReference>
<dbReference type="GO" id="GO:0009432">
    <property type="term" value="P:SOS response"/>
    <property type="evidence" value="ECO:0007669"/>
    <property type="project" value="UniProtKB-UniRule"/>
</dbReference>
<dbReference type="FunFam" id="1.20.1050.90:FF:000005">
    <property type="entry name" value="DNA replication and repair protein RecF"/>
    <property type="match status" value="1"/>
</dbReference>
<dbReference type="Gene3D" id="3.40.50.300">
    <property type="entry name" value="P-loop containing nucleotide triphosphate hydrolases"/>
    <property type="match status" value="1"/>
</dbReference>
<dbReference type="Gene3D" id="1.20.1050.90">
    <property type="entry name" value="RecF/RecN/SMC, N-terminal domain"/>
    <property type="match status" value="1"/>
</dbReference>
<dbReference type="HAMAP" id="MF_00365">
    <property type="entry name" value="RecF"/>
    <property type="match status" value="1"/>
</dbReference>
<dbReference type="InterPro" id="IPR001238">
    <property type="entry name" value="DNA-binding_RecF"/>
</dbReference>
<dbReference type="InterPro" id="IPR018078">
    <property type="entry name" value="DNA-binding_RecF_CS"/>
</dbReference>
<dbReference type="InterPro" id="IPR027417">
    <property type="entry name" value="P-loop_NTPase"/>
</dbReference>
<dbReference type="InterPro" id="IPR003395">
    <property type="entry name" value="RecF/RecN/SMC_N"/>
</dbReference>
<dbReference type="InterPro" id="IPR042174">
    <property type="entry name" value="RecF_2"/>
</dbReference>
<dbReference type="NCBIfam" id="TIGR00611">
    <property type="entry name" value="recf"/>
    <property type="match status" value="1"/>
</dbReference>
<dbReference type="PANTHER" id="PTHR32182">
    <property type="entry name" value="DNA REPLICATION AND REPAIR PROTEIN RECF"/>
    <property type="match status" value="1"/>
</dbReference>
<dbReference type="PANTHER" id="PTHR32182:SF0">
    <property type="entry name" value="DNA REPLICATION AND REPAIR PROTEIN RECF"/>
    <property type="match status" value="1"/>
</dbReference>
<dbReference type="Pfam" id="PF02463">
    <property type="entry name" value="SMC_N"/>
    <property type="match status" value="1"/>
</dbReference>
<dbReference type="SUPFAM" id="SSF52540">
    <property type="entry name" value="P-loop containing nucleoside triphosphate hydrolases"/>
    <property type="match status" value="1"/>
</dbReference>
<dbReference type="PROSITE" id="PS00617">
    <property type="entry name" value="RECF_1"/>
    <property type="match status" value="1"/>
</dbReference>
<dbReference type="PROSITE" id="PS00618">
    <property type="entry name" value="RECF_2"/>
    <property type="match status" value="1"/>
</dbReference>
<sequence>MILKRISILNYKNLEQVELNFSAKLNCFFGQNGMGKTNLLDAVYFLSFCKSAGNPIDSQNIRHEQDFFVIQGFYEAMDGTPEEIYCGMKRRSKKQFKRNKKEYSRLSDHIGFIPLVMVSPADSELIAGGSDERRRFMDVVISQYDKEYLDALIRYNKALVQRNTLLKSEQPIEEELFLVWEEMMAQAGEVVFRKREAFISEFIPIFQSFYSYISQDKEQVGLTYESHARNASLLEVLKESRVRDKIMGYSLRGIHKDELNMLLGDFPIKREGSQGQNKTYLVALKLAQFDFLKRTGSTVPLLLLDDIFDKLDASRVEQIVKLVAGDNFGQIFITDTNREHLDRILYKVGSDYKMFRVESGAINEMEEKER</sequence>
<feature type="chain" id="PRO_0000236110" description="DNA replication and repair protein RecF">
    <location>
        <begin position="1"/>
        <end position="370"/>
    </location>
</feature>
<feature type="binding site" evidence="1">
    <location>
        <begin position="30"/>
        <end position="37"/>
    </location>
    <ligand>
        <name>ATP</name>
        <dbReference type="ChEBI" id="CHEBI:30616"/>
    </ligand>
</feature>